<organism>
    <name type="scientific">Yersinia pseudotuberculosis serotype I (strain IP32953)</name>
    <dbReference type="NCBI Taxonomy" id="273123"/>
    <lineage>
        <taxon>Bacteria</taxon>
        <taxon>Pseudomonadati</taxon>
        <taxon>Pseudomonadota</taxon>
        <taxon>Gammaproteobacteria</taxon>
        <taxon>Enterobacterales</taxon>
        <taxon>Yersiniaceae</taxon>
        <taxon>Yersinia</taxon>
    </lineage>
</organism>
<name>DEOD_YERPS</name>
<dbReference type="EC" id="2.4.2.1" evidence="2"/>
<dbReference type="EMBL" id="BX936398">
    <property type="protein sequence ID" value="CAH19824.1"/>
    <property type="molecule type" value="Genomic_DNA"/>
</dbReference>
<dbReference type="RefSeq" id="WP_011191689.1">
    <property type="nucleotide sequence ID" value="NC_006155.1"/>
</dbReference>
<dbReference type="SMR" id="Q66EV7"/>
<dbReference type="GeneID" id="49787416"/>
<dbReference type="KEGG" id="ypo:BZ17_1975"/>
<dbReference type="KEGG" id="yps:YPTB0584"/>
<dbReference type="PATRIC" id="fig|273123.14.peg.2101"/>
<dbReference type="Proteomes" id="UP000001011">
    <property type="component" value="Chromosome"/>
</dbReference>
<dbReference type="GO" id="GO:0005829">
    <property type="term" value="C:cytosol"/>
    <property type="evidence" value="ECO:0007669"/>
    <property type="project" value="TreeGrafter"/>
</dbReference>
<dbReference type="GO" id="GO:0004731">
    <property type="term" value="F:purine-nucleoside phosphorylase activity"/>
    <property type="evidence" value="ECO:0007669"/>
    <property type="project" value="UniProtKB-UniRule"/>
</dbReference>
<dbReference type="GO" id="GO:0006152">
    <property type="term" value="P:purine nucleoside catabolic process"/>
    <property type="evidence" value="ECO:0007669"/>
    <property type="project" value="TreeGrafter"/>
</dbReference>
<dbReference type="CDD" id="cd09006">
    <property type="entry name" value="PNP_EcPNPI-like"/>
    <property type="match status" value="1"/>
</dbReference>
<dbReference type="FunFam" id="3.40.50.1580:FF:000002">
    <property type="entry name" value="Purine nucleoside phosphorylase DeoD-type"/>
    <property type="match status" value="1"/>
</dbReference>
<dbReference type="Gene3D" id="3.40.50.1580">
    <property type="entry name" value="Nucleoside phosphorylase domain"/>
    <property type="match status" value="1"/>
</dbReference>
<dbReference type="HAMAP" id="MF_01627">
    <property type="entry name" value="Pur_nucleosid_phosp"/>
    <property type="match status" value="1"/>
</dbReference>
<dbReference type="InterPro" id="IPR004402">
    <property type="entry name" value="DeoD-type"/>
</dbReference>
<dbReference type="InterPro" id="IPR018016">
    <property type="entry name" value="Nucleoside_phosphorylase_CS"/>
</dbReference>
<dbReference type="InterPro" id="IPR000845">
    <property type="entry name" value="Nucleoside_phosphorylase_d"/>
</dbReference>
<dbReference type="InterPro" id="IPR035994">
    <property type="entry name" value="Nucleoside_phosphorylase_sf"/>
</dbReference>
<dbReference type="NCBIfam" id="TIGR00107">
    <property type="entry name" value="deoD"/>
    <property type="match status" value="1"/>
</dbReference>
<dbReference type="NCBIfam" id="NF004489">
    <property type="entry name" value="PRK05819.1"/>
    <property type="match status" value="1"/>
</dbReference>
<dbReference type="NCBIfam" id="NF009914">
    <property type="entry name" value="PRK13374.1"/>
    <property type="match status" value="1"/>
</dbReference>
<dbReference type="PANTHER" id="PTHR43691:SF2">
    <property type="entry name" value="PURINE NUCLEOSIDE PHOSPHORYLASE DEOD-TYPE"/>
    <property type="match status" value="1"/>
</dbReference>
<dbReference type="PANTHER" id="PTHR43691">
    <property type="entry name" value="URIDINE PHOSPHORYLASE"/>
    <property type="match status" value="1"/>
</dbReference>
<dbReference type="Pfam" id="PF01048">
    <property type="entry name" value="PNP_UDP_1"/>
    <property type="match status" value="1"/>
</dbReference>
<dbReference type="SUPFAM" id="SSF53167">
    <property type="entry name" value="Purine and uridine phosphorylases"/>
    <property type="match status" value="1"/>
</dbReference>
<dbReference type="PROSITE" id="PS01232">
    <property type="entry name" value="PNP_UDP_1"/>
    <property type="match status" value="1"/>
</dbReference>
<reference key="1">
    <citation type="journal article" date="2004" name="Proc. Natl. Acad. Sci. U.S.A.">
        <title>Insights into the evolution of Yersinia pestis through whole-genome comparison with Yersinia pseudotuberculosis.</title>
        <authorList>
            <person name="Chain P.S.G."/>
            <person name="Carniel E."/>
            <person name="Larimer F.W."/>
            <person name="Lamerdin J."/>
            <person name="Stoutland P.O."/>
            <person name="Regala W.M."/>
            <person name="Georgescu A.M."/>
            <person name="Vergez L.M."/>
            <person name="Land M.L."/>
            <person name="Motin V.L."/>
            <person name="Brubaker R.R."/>
            <person name="Fowler J."/>
            <person name="Hinnebusch J."/>
            <person name="Marceau M."/>
            <person name="Medigue C."/>
            <person name="Simonet M."/>
            <person name="Chenal-Francisque V."/>
            <person name="Souza B."/>
            <person name="Dacheux D."/>
            <person name="Elliott J.M."/>
            <person name="Derbise A."/>
            <person name="Hauser L.J."/>
            <person name="Garcia E."/>
        </authorList>
    </citation>
    <scope>NUCLEOTIDE SEQUENCE [LARGE SCALE GENOMIC DNA]</scope>
    <source>
        <strain>IP32953</strain>
    </source>
</reference>
<keyword id="KW-0328">Glycosyltransferase</keyword>
<keyword id="KW-0808">Transferase</keyword>
<comment type="function">
    <text evidence="2">Catalyzes the reversible phosphorolytic breakdown of the N-glycosidic bond in the beta-(deoxy)ribonucleoside molecules, with the formation of the corresponding free purine bases and pentose-1-phosphate.</text>
</comment>
<comment type="catalytic activity">
    <reaction evidence="2">
        <text>a purine D-ribonucleoside + phosphate = a purine nucleobase + alpha-D-ribose 1-phosphate</text>
        <dbReference type="Rhea" id="RHEA:19805"/>
        <dbReference type="ChEBI" id="CHEBI:26386"/>
        <dbReference type="ChEBI" id="CHEBI:43474"/>
        <dbReference type="ChEBI" id="CHEBI:57720"/>
        <dbReference type="ChEBI" id="CHEBI:142355"/>
        <dbReference type="EC" id="2.4.2.1"/>
    </reaction>
</comment>
<comment type="catalytic activity">
    <reaction evidence="2">
        <text>a purine 2'-deoxy-D-ribonucleoside + phosphate = a purine nucleobase + 2-deoxy-alpha-D-ribose 1-phosphate</text>
        <dbReference type="Rhea" id="RHEA:36431"/>
        <dbReference type="ChEBI" id="CHEBI:26386"/>
        <dbReference type="ChEBI" id="CHEBI:43474"/>
        <dbReference type="ChEBI" id="CHEBI:57259"/>
        <dbReference type="ChEBI" id="CHEBI:142361"/>
        <dbReference type="EC" id="2.4.2.1"/>
    </reaction>
</comment>
<comment type="subunit">
    <text evidence="2">Homohexamer; trimer of homodimers.</text>
</comment>
<comment type="similarity">
    <text evidence="2">Belongs to the PNP/UDP phosphorylase family.</text>
</comment>
<proteinExistence type="inferred from homology"/>
<protein>
    <recommendedName>
        <fullName evidence="2">Purine nucleoside phosphorylase DeoD-type</fullName>
        <shortName evidence="2">PNP</shortName>
        <ecNumber evidence="2">2.4.2.1</ecNumber>
    </recommendedName>
</protein>
<gene>
    <name evidence="2" type="primary">deoD</name>
    <name type="ordered locus">YPTB0584</name>
</gene>
<sequence length="239" mass="25936">MATPHINAEMGDFADVVLMPGDPLRAKFIAETFLQDVREVNNVRGMLGFTGTYKGRKISVMGHGMGIPSCSIYAKELITDFGVKKIIRVGSCGAVRTDVKLRDVVIGMGACTDSKVNRMRFKDHDYAAIADFEMTRNAVDAAKAKGVNVRVGNLFSADLFYTPDPQMFDVMEKYGILGVEMEAAGIYGVAAEFGAKALTICTVSDHIRTGEQTTAAERQTTFNDMIEIALESVLLGDNA</sequence>
<feature type="chain" id="PRO_0000063182" description="Purine nucleoside phosphorylase DeoD-type">
    <location>
        <begin position="1"/>
        <end position="239"/>
    </location>
</feature>
<feature type="active site" description="Proton donor" evidence="2">
    <location>
        <position position="205"/>
    </location>
</feature>
<feature type="binding site" evidence="1">
    <location>
        <position position="5"/>
    </location>
    <ligand>
        <name>a purine D-ribonucleoside</name>
        <dbReference type="ChEBI" id="CHEBI:142355"/>
        <note>ligand shared between dimeric partners</note>
    </ligand>
</feature>
<feature type="binding site" description="in other chain" evidence="1">
    <location>
        <position position="21"/>
    </location>
    <ligand>
        <name>phosphate</name>
        <dbReference type="ChEBI" id="CHEBI:43474"/>
        <note>ligand shared between dimeric partners</note>
    </ligand>
</feature>
<feature type="binding site" description="in other chain" evidence="1">
    <location>
        <position position="25"/>
    </location>
    <ligand>
        <name>phosphate</name>
        <dbReference type="ChEBI" id="CHEBI:43474"/>
        <note>ligand shared between dimeric partners</note>
    </ligand>
</feature>
<feature type="binding site" evidence="1">
    <location>
        <position position="44"/>
    </location>
    <ligand>
        <name>phosphate</name>
        <dbReference type="ChEBI" id="CHEBI:43474"/>
        <note>ligand shared between dimeric partners</note>
    </ligand>
</feature>
<feature type="binding site" description="in other chain" evidence="1">
    <location>
        <begin position="88"/>
        <end position="91"/>
    </location>
    <ligand>
        <name>phosphate</name>
        <dbReference type="ChEBI" id="CHEBI:43474"/>
        <note>ligand shared between dimeric partners</note>
    </ligand>
</feature>
<feature type="binding site" description="in other chain" evidence="1">
    <location>
        <begin position="180"/>
        <end position="182"/>
    </location>
    <ligand>
        <name>a purine D-ribonucleoside</name>
        <dbReference type="ChEBI" id="CHEBI:142355"/>
        <note>ligand shared between dimeric partners</note>
    </ligand>
</feature>
<feature type="binding site" description="in other chain" evidence="1">
    <location>
        <begin position="204"/>
        <end position="205"/>
    </location>
    <ligand>
        <name>a purine D-ribonucleoside</name>
        <dbReference type="ChEBI" id="CHEBI:142355"/>
        <note>ligand shared between dimeric partners</note>
    </ligand>
</feature>
<feature type="site" description="Important for catalytic activity" evidence="2">
    <location>
        <position position="218"/>
    </location>
</feature>
<evidence type="ECO:0000250" key="1">
    <source>
        <dbReference type="UniProtKB" id="P50389"/>
    </source>
</evidence>
<evidence type="ECO:0000255" key="2">
    <source>
        <dbReference type="HAMAP-Rule" id="MF_01627"/>
    </source>
</evidence>
<accession>Q66EV7</accession>